<protein>
    <recommendedName>
        <fullName>Connectin</fullName>
    </recommendedName>
</protein>
<feature type="signal peptide">
    <location>
        <begin position="1"/>
        <end position="24"/>
    </location>
</feature>
<feature type="chain" id="PRO_0000020979" description="Connectin">
    <location>
        <begin position="25"/>
        <end position="658"/>
    </location>
</feature>
<feature type="propeptide" id="PRO_0000020980" description="Removed in mature form" evidence="1">
    <location>
        <begin position="659"/>
        <end position="682"/>
    </location>
</feature>
<feature type="repeat" description="LRR 1">
    <location>
        <begin position="149"/>
        <end position="172"/>
    </location>
</feature>
<feature type="repeat" description="LRR 2">
    <location>
        <begin position="173"/>
        <end position="196"/>
    </location>
</feature>
<feature type="repeat" description="LRR 3">
    <location>
        <begin position="199"/>
        <end position="220"/>
    </location>
</feature>
<feature type="repeat" description="LRR 4">
    <location>
        <begin position="223"/>
        <end position="244"/>
    </location>
</feature>
<feature type="repeat" description="LRR 5">
    <location>
        <begin position="247"/>
        <end position="268"/>
    </location>
</feature>
<feature type="repeat" description="LRR 6">
    <location>
        <begin position="271"/>
        <end position="292"/>
    </location>
</feature>
<feature type="repeat" description="LRR 7">
    <location>
        <begin position="295"/>
        <end position="316"/>
    </location>
</feature>
<feature type="repeat" description="LRR 8">
    <location>
        <begin position="319"/>
        <end position="342"/>
    </location>
</feature>
<feature type="repeat" description="LRR 9">
    <location>
        <begin position="343"/>
        <end position="364"/>
    </location>
</feature>
<feature type="repeat" description="LRR 10">
    <location>
        <begin position="367"/>
        <end position="388"/>
    </location>
</feature>
<feature type="repeat" description="LRR 11">
    <location>
        <begin position="389"/>
        <end position="404"/>
    </location>
</feature>
<feature type="domain" description="LRRCT">
    <location>
        <begin position="405"/>
        <end position="462"/>
    </location>
</feature>
<feature type="region of interest" description="Disordered" evidence="2">
    <location>
        <begin position="29"/>
        <end position="54"/>
    </location>
</feature>
<feature type="region of interest" description="Disordered" evidence="2">
    <location>
        <begin position="503"/>
        <end position="536"/>
    </location>
</feature>
<feature type="compositionally biased region" description="Low complexity" evidence="2">
    <location>
        <begin position="40"/>
        <end position="54"/>
    </location>
</feature>
<feature type="lipid moiety-binding region" description="GPI-anchor amidated alanine" evidence="1">
    <location>
        <position position="658"/>
    </location>
</feature>
<feature type="sequence conflict" description="In Ref. 2; CAA48652." evidence="3" ref="2">
    <original>E</original>
    <variation>G</variation>
    <location>
        <position position="631"/>
    </location>
</feature>
<feature type="sequence conflict" description="In Ref. 1; AAA28424." evidence="3" ref="1">
    <original>VALM</original>
    <variation>QVAL</variation>
    <location>
        <begin position="674"/>
        <end position="677"/>
    </location>
</feature>
<gene>
    <name type="primary">Con</name>
    <name type="ORF">CG7503</name>
</gene>
<reference key="1">
    <citation type="journal article" date="1992" name="Cell">
        <title>Connectin: a homophilic cell adhesion molecule expressed on a subset of muscles and the motoneurons that innervate them in Drosophila.</title>
        <authorList>
            <person name="Nose A."/>
            <person name="Mahajan V.B."/>
            <person name="Goodman C.S."/>
        </authorList>
    </citation>
    <scope>NUCLEOTIDE SEQUENCE [MRNA]</scope>
</reference>
<reference key="2">
    <citation type="journal article" date="1992" name="Development">
        <title>Connectin, a target of homeotic gene control in Drosophila.</title>
        <authorList>
            <person name="Gould A.P."/>
            <person name="White R.A.H."/>
        </authorList>
    </citation>
    <scope>NUCLEOTIDE SEQUENCE [MRNA]</scope>
    <source>
        <strain>Oregon-R</strain>
    </source>
</reference>
<reference key="3">
    <citation type="journal article" date="2000" name="Science">
        <title>The genome sequence of Drosophila melanogaster.</title>
        <authorList>
            <person name="Adams M.D."/>
            <person name="Celniker S.E."/>
            <person name="Holt R.A."/>
            <person name="Evans C.A."/>
            <person name="Gocayne J.D."/>
            <person name="Amanatides P.G."/>
            <person name="Scherer S.E."/>
            <person name="Li P.W."/>
            <person name="Hoskins R.A."/>
            <person name="Galle R.F."/>
            <person name="George R.A."/>
            <person name="Lewis S.E."/>
            <person name="Richards S."/>
            <person name="Ashburner M."/>
            <person name="Henderson S.N."/>
            <person name="Sutton G.G."/>
            <person name="Wortman J.R."/>
            <person name="Yandell M.D."/>
            <person name="Zhang Q."/>
            <person name="Chen L.X."/>
            <person name="Brandon R.C."/>
            <person name="Rogers Y.-H.C."/>
            <person name="Blazej R.G."/>
            <person name="Champe M."/>
            <person name="Pfeiffer B.D."/>
            <person name="Wan K.H."/>
            <person name="Doyle C."/>
            <person name="Baxter E.G."/>
            <person name="Helt G."/>
            <person name="Nelson C.R."/>
            <person name="Miklos G.L.G."/>
            <person name="Abril J.F."/>
            <person name="Agbayani A."/>
            <person name="An H.-J."/>
            <person name="Andrews-Pfannkoch C."/>
            <person name="Baldwin D."/>
            <person name="Ballew R.M."/>
            <person name="Basu A."/>
            <person name="Baxendale J."/>
            <person name="Bayraktaroglu L."/>
            <person name="Beasley E.M."/>
            <person name="Beeson K.Y."/>
            <person name="Benos P.V."/>
            <person name="Berman B.P."/>
            <person name="Bhandari D."/>
            <person name="Bolshakov S."/>
            <person name="Borkova D."/>
            <person name="Botchan M.R."/>
            <person name="Bouck J."/>
            <person name="Brokstein P."/>
            <person name="Brottier P."/>
            <person name="Burtis K.C."/>
            <person name="Busam D.A."/>
            <person name="Butler H."/>
            <person name="Cadieu E."/>
            <person name="Center A."/>
            <person name="Chandra I."/>
            <person name="Cherry J.M."/>
            <person name="Cawley S."/>
            <person name="Dahlke C."/>
            <person name="Davenport L.B."/>
            <person name="Davies P."/>
            <person name="de Pablos B."/>
            <person name="Delcher A."/>
            <person name="Deng Z."/>
            <person name="Mays A.D."/>
            <person name="Dew I."/>
            <person name="Dietz S.M."/>
            <person name="Dodson K."/>
            <person name="Doup L.E."/>
            <person name="Downes M."/>
            <person name="Dugan-Rocha S."/>
            <person name="Dunkov B.C."/>
            <person name="Dunn P."/>
            <person name="Durbin K.J."/>
            <person name="Evangelista C.C."/>
            <person name="Ferraz C."/>
            <person name="Ferriera S."/>
            <person name="Fleischmann W."/>
            <person name="Fosler C."/>
            <person name="Gabrielian A.E."/>
            <person name="Garg N.S."/>
            <person name="Gelbart W.M."/>
            <person name="Glasser K."/>
            <person name="Glodek A."/>
            <person name="Gong F."/>
            <person name="Gorrell J.H."/>
            <person name="Gu Z."/>
            <person name="Guan P."/>
            <person name="Harris M."/>
            <person name="Harris N.L."/>
            <person name="Harvey D.A."/>
            <person name="Heiman T.J."/>
            <person name="Hernandez J.R."/>
            <person name="Houck J."/>
            <person name="Hostin D."/>
            <person name="Houston K.A."/>
            <person name="Howland T.J."/>
            <person name="Wei M.-H."/>
            <person name="Ibegwam C."/>
            <person name="Jalali M."/>
            <person name="Kalush F."/>
            <person name="Karpen G.H."/>
            <person name="Ke Z."/>
            <person name="Kennison J.A."/>
            <person name="Ketchum K.A."/>
            <person name="Kimmel B.E."/>
            <person name="Kodira C.D."/>
            <person name="Kraft C.L."/>
            <person name="Kravitz S."/>
            <person name="Kulp D."/>
            <person name="Lai Z."/>
            <person name="Lasko P."/>
            <person name="Lei Y."/>
            <person name="Levitsky A.A."/>
            <person name="Li J.H."/>
            <person name="Li Z."/>
            <person name="Liang Y."/>
            <person name="Lin X."/>
            <person name="Liu X."/>
            <person name="Mattei B."/>
            <person name="McIntosh T.C."/>
            <person name="McLeod M.P."/>
            <person name="McPherson D."/>
            <person name="Merkulov G."/>
            <person name="Milshina N.V."/>
            <person name="Mobarry C."/>
            <person name="Morris J."/>
            <person name="Moshrefi A."/>
            <person name="Mount S.M."/>
            <person name="Moy M."/>
            <person name="Murphy B."/>
            <person name="Murphy L."/>
            <person name="Muzny D.M."/>
            <person name="Nelson D.L."/>
            <person name="Nelson D.R."/>
            <person name="Nelson K.A."/>
            <person name="Nixon K."/>
            <person name="Nusskern D.R."/>
            <person name="Pacleb J.M."/>
            <person name="Palazzolo M."/>
            <person name="Pittman G.S."/>
            <person name="Pan S."/>
            <person name="Pollard J."/>
            <person name="Puri V."/>
            <person name="Reese M.G."/>
            <person name="Reinert K."/>
            <person name="Remington K."/>
            <person name="Saunders R.D.C."/>
            <person name="Scheeler F."/>
            <person name="Shen H."/>
            <person name="Shue B.C."/>
            <person name="Siden-Kiamos I."/>
            <person name="Simpson M."/>
            <person name="Skupski M.P."/>
            <person name="Smith T.J."/>
            <person name="Spier E."/>
            <person name="Spradling A.C."/>
            <person name="Stapleton M."/>
            <person name="Strong R."/>
            <person name="Sun E."/>
            <person name="Svirskas R."/>
            <person name="Tector C."/>
            <person name="Turner R."/>
            <person name="Venter E."/>
            <person name="Wang A.H."/>
            <person name="Wang X."/>
            <person name="Wang Z.-Y."/>
            <person name="Wassarman D.A."/>
            <person name="Weinstock G.M."/>
            <person name="Weissenbach J."/>
            <person name="Williams S.M."/>
            <person name="Woodage T."/>
            <person name="Worley K.C."/>
            <person name="Wu D."/>
            <person name="Yang S."/>
            <person name="Yao Q.A."/>
            <person name="Ye J."/>
            <person name="Yeh R.-F."/>
            <person name="Zaveri J.S."/>
            <person name="Zhan M."/>
            <person name="Zhang G."/>
            <person name="Zhao Q."/>
            <person name="Zheng L."/>
            <person name="Zheng X.H."/>
            <person name="Zhong F.N."/>
            <person name="Zhong W."/>
            <person name="Zhou X."/>
            <person name="Zhu S.C."/>
            <person name="Zhu X."/>
            <person name="Smith H.O."/>
            <person name="Gibbs R.A."/>
            <person name="Myers E.W."/>
            <person name="Rubin G.M."/>
            <person name="Venter J.C."/>
        </authorList>
    </citation>
    <scope>NUCLEOTIDE SEQUENCE [LARGE SCALE GENOMIC DNA]</scope>
    <source>
        <strain>Berkeley</strain>
    </source>
</reference>
<reference key="4">
    <citation type="journal article" date="2002" name="Genome Biol.">
        <title>Annotation of the Drosophila melanogaster euchromatic genome: a systematic review.</title>
        <authorList>
            <person name="Misra S."/>
            <person name="Crosby M.A."/>
            <person name="Mungall C.J."/>
            <person name="Matthews B.B."/>
            <person name="Campbell K.S."/>
            <person name="Hradecky P."/>
            <person name="Huang Y."/>
            <person name="Kaminker J.S."/>
            <person name="Millburn G.H."/>
            <person name="Prochnik S.E."/>
            <person name="Smith C.D."/>
            <person name="Tupy J.L."/>
            <person name="Whitfield E.J."/>
            <person name="Bayraktaroglu L."/>
            <person name="Berman B.P."/>
            <person name="Bettencourt B.R."/>
            <person name="Celniker S.E."/>
            <person name="de Grey A.D.N.J."/>
            <person name="Drysdale R.A."/>
            <person name="Harris N.L."/>
            <person name="Richter J."/>
            <person name="Russo S."/>
            <person name="Schroeder A.J."/>
            <person name="Shu S.Q."/>
            <person name="Stapleton M."/>
            <person name="Yamada C."/>
            <person name="Ashburner M."/>
            <person name="Gelbart W.M."/>
            <person name="Rubin G.M."/>
            <person name="Lewis S.E."/>
        </authorList>
    </citation>
    <scope>GENOME REANNOTATION</scope>
    <source>
        <strain>Berkeley</strain>
    </source>
</reference>
<reference key="5">
    <citation type="journal article" date="2002" name="Genome Biol.">
        <title>A Drosophila full-length cDNA resource.</title>
        <authorList>
            <person name="Stapleton M."/>
            <person name="Carlson J.W."/>
            <person name="Brokstein P."/>
            <person name="Yu C."/>
            <person name="Champe M."/>
            <person name="George R.A."/>
            <person name="Guarin H."/>
            <person name="Kronmiller B."/>
            <person name="Pacleb J.M."/>
            <person name="Park S."/>
            <person name="Wan K.H."/>
            <person name="Rubin G.M."/>
            <person name="Celniker S.E."/>
        </authorList>
    </citation>
    <scope>NUCLEOTIDE SEQUENCE [LARGE SCALE MRNA] OF 466-682</scope>
    <source>
        <strain>Berkeley</strain>
        <tissue>Head</tissue>
    </source>
</reference>
<name>CONN_DROME</name>
<sequence>MATLADSAICFLLLSLLLIGACLVTPTEGRAKDDRRTRGRGSSSGVLSSSSSSSNNMNNGYYSGSSSTAGSSSGYVFTSSSAVNSGSTGYSGPMDSTGFCTRRRDMKLMCYCTPDENHVPVQKAECWVFSEGLHQNDTTWTRFYQQKRLRELKFVIQNNARLDYIPTMIIEPLKNLSSIVIEYSQVEIVKSYAFANLPFLERIILNNNHIMALDQDAFANHIRLRELNLEHNQIFEMDRYAFRNLPLCERLFLNNNNISTLHEGLFADMARLTFLNLAHNQINVLTSEIFRGLGNLNVLKLTRNNLNFIGDTVFAELWSLSELELDDNRIERISERALDGLNTLKTLNLRNNLLKKIDNGLLRGTPALLSINVQANKLETLTFYTFQPIMDNLVNSTSELLVSDNKFICDCRLQWIFELKNRTRHLQLRDSLEDLHCTLQEPKLSHFVDPVPPTILDVLNIGGFTAIGSNSASMGGVGNSVVGSSYSGLTMDDSRKHLGSRSRQALRGQRQFASSAENVVESKMRRRRKRQEEVKEKDLAAVAPAHKRYDYYDDNNGGMSLGHGLDLDDNLSLHKQGFYGAGSPVVGHNDVDVLMTSHSASGDALDILTTKNAIYIKLFLLKPEMLPCHDELSDPTELPLSRDLMDVRSNVGQDMSTAGANSLAQGMTIIVSLVALMMISRG</sequence>
<comment type="function">
    <text>Cell adhesion protein involved in target recognition during neuromuscular development. Mediates homophilic cellular adhesion.</text>
</comment>
<comment type="subcellular location">
    <subcellularLocation>
        <location evidence="3">Cell membrane</location>
        <topology evidence="3">Lipid-anchor</topology>
        <topology evidence="3">GPI-anchor</topology>
    </subcellularLocation>
</comment>
<comment type="tissue specificity">
    <text>Predominantly expressed in abdominal and thoracic segment muscle and motorneuron cells.</text>
</comment>
<comment type="developmental stage">
    <text>Embryo.</text>
</comment>
<comment type="sequence caution" evidence="3">
    <conflict type="erroneous initiation">
        <sequence resource="EMBL-CDS" id="AAF47952"/>
    </conflict>
</comment>
<comment type="sequence caution" evidence="3">
    <conflict type="erroneous initiation">
        <sequence resource="EMBL-CDS" id="AAM50172"/>
    </conflict>
</comment>
<keyword id="KW-0130">Cell adhesion</keyword>
<keyword id="KW-1003">Cell membrane</keyword>
<keyword id="KW-0217">Developmental protein</keyword>
<keyword id="KW-0325">Glycoprotein</keyword>
<keyword id="KW-0336">GPI-anchor</keyword>
<keyword id="KW-0433">Leucine-rich repeat</keyword>
<keyword id="KW-0449">Lipoprotein</keyword>
<keyword id="KW-0472">Membrane</keyword>
<keyword id="KW-1185">Reference proteome</keyword>
<keyword id="KW-0677">Repeat</keyword>
<keyword id="KW-0732">Signal</keyword>
<proteinExistence type="evidence at transcript level"/>
<dbReference type="EMBL" id="M96647">
    <property type="protein sequence ID" value="AAA28424.1"/>
    <property type="molecule type" value="mRNA"/>
</dbReference>
<dbReference type="EMBL" id="X68701">
    <property type="protein sequence ID" value="CAA48652.1"/>
    <property type="molecule type" value="mRNA"/>
</dbReference>
<dbReference type="EMBL" id="AE014296">
    <property type="protein sequence ID" value="AAF47952.3"/>
    <property type="status" value="ALT_INIT"/>
    <property type="molecule type" value="Genomic_DNA"/>
</dbReference>
<dbReference type="EMBL" id="AY119518">
    <property type="protein sequence ID" value="AAM50172.1"/>
    <property type="status" value="ALT_INIT"/>
    <property type="molecule type" value="mRNA"/>
</dbReference>
<dbReference type="PIR" id="A43318">
    <property type="entry name" value="A43318"/>
</dbReference>
<dbReference type="PIR" id="A49121">
    <property type="entry name" value="A49121"/>
</dbReference>
<dbReference type="RefSeq" id="NP_001246635.1">
    <property type="nucleotide sequence ID" value="NM_001259706.2"/>
</dbReference>
<dbReference type="RefSeq" id="NP_523930.3">
    <property type="nucleotide sequence ID" value="NM_079206.5"/>
</dbReference>
<dbReference type="SMR" id="Q01819"/>
<dbReference type="BioGRID" id="64058">
    <property type="interactions" value="2"/>
</dbReference>
<dbReference type="FunCoup" id="Q01819">
    <property type="interactions" value="2"/>
</dbReference>
<dbReference type="STRING" id="7227.FBpp0301699"/>
<dbReference type="PaxDb" id="7227-FBpp0301699"/>
<dbReference type="EnsemblMetazoa" id="FBtr0309972">
    <property type="protein sequence ID" value="FBpp0301699"/>
    <property type="gene ID" value="FBgn0005775"/>
</dbReference>
<dbReference type="GeneID" id="38590"/>
<dbReference type="KEGG" id="dme:Dmel_CG7503"/>
<dbReference type="UCSC" id="CG7503-RA">
    <property type="organism name" value="d. melanogaster"/>
</dbReference>
<dbReference type="AGR" id="FB:FBgn0005775"/>
<dbReference type="CTD" id="38590"/>
<dbReference type="FlyBase" id="FBgn0005775">
    <property type="gene designation" value="Con"/>
</dbReference>
<dbReference type="VEuPathDB" id="VectorBase:FBgn0005775"/>
<dbReference type="eggNOG" id="KOG0619">
    <property type="taxonomic scope" value="Eukaryota"/>
</dbReference>
<dbReference type="HOGENOM" id="CLU_405049_0_0_1"/>
<dbReference type="InParanoid" id="Q01819"/>
<dbReference type="OrthoDB" id="27267at2759"/>
<dbReference type="PhylomeDB" id="Q01819"/>
<dbReference type="BioGRID-ORCS" id="38590">
    <property type="hits" value="0 hits in 1 CRISPR screen"/>
</dbReference>
<dbReference type="GenomeRNAi" id="38590"/>
<dbReference type="PRO" id="PR:Q01819"/>
<dbReference type="Proteomes" id="UP000000803">
    <property type="component" value="Chromosome 3L"/>
</dbReference>
<dbReference type="Bgee" id="FBgn0005775">
    <property type="expression patterns" value="Expressed in T neuron T2a (Drosophila) in insect head and 194 other cell types or tissues"/>
</dbReference>
<dbReference type="ExpressionAtlas" id="Q01819">
    <property type="expression patterns" value="baseline and differential"/>
</dbReference>
<dbReference type="GO" id="GO:0044295">
    <property type="term" value="C:axonal growth cone"/>
    <property type="evidence" value="ECO:0000314"/>
    <property type="project" value="FlyBase"/>
</dbReference>
<dbReference type="GO" id="GO:0009986">
    <property type="term" value="C:cell surface"/>
    <property type="evidence" value="ECO:0000314"/>
    <property type="project" value="FlyBase"/>
</dbReference>
<dbReference type="GO" id="GO:0031594">
    <property type="term" value="C:neuromuscular junction"/>
    <property type="evidence" value="ECO:0000314"/>
    <property type="project" value="FlyBase"/>
</dbReference>
<dbReference type="GO" id="GO:0005886">
    <property type="term" value="C:plasma membrane"/>
    <property type="evidence" value="ECO:0000304"/>
    <property type="project" value="FlyBase"/>
</dbReference>
<dbReference type="GO" id="GO:0098552">
    <property type="term" value="C:side of membrane"/>
    <property type="evidence" value="ECO:0007669"/>
    <property type="project" value="UniProtKB-KW"/>
</dbReference>
<dbReference type="GO" id="GO:0007413">
    <property type="term" value="P:axonal fasciculation"/>
    <property type="evidence" value="ECO:0000304"/>
    <property type="project" value="FlyBase"/>
</dbReference>
<dbReference type="GO" id="GO:0007156">
    <property type="term" value="P:homophilic cell adhesion via plasma membrane adhesion molecules"/>
    <property type="evidence" value="ECO:0000314"/>
    <property type="project" value="FlyBase"/>
</dbReference>
<dbReference type="GO" id="GO:0016200">
    <property type="term" value="P:synaptic target attraction"/>
    <property type="evidence" value="ECO:0000304"/>
    <property type="project" value="FlyBase"/>
</dbReference>
<dbReference type="FunFam" id="3.80.10.10:FF:001470">
    <property type="entry name" value="Connectin, isoform B"/>
    <property type="match status" value="1"/>
</dbReference>
<dbReference type="Gene3D" id="3.80.10.10">
    <property type="entry name" value="Ribonuclease Inhibitor"/>
    <property type="match status" value="2"/>
</dbReference>
<dbReference type="InterPro" id="IPR000483">
    <property type="entry name" value="Cys-rich_flank_reg_C"/>
</dbReference>
<dbReference type="InterPro" id="IPR001611">
    <property type="entry name" value="Leu-rich_rpt"/>
</dbReference>
<dbReference type="InterPro" id="IPR003591">
    <property type="entry name" value="Leu-rich_rpt_typical-subtyp"/>
</dbReference>
<dbReference type="InterPro" id="IPR032675">
    <property type="entry name" value="LRR_dom_sf"/>
</dbReference>
<dbReference type="PANTHER" id="PTHR24366:SF164">
    <property type="entry name" value="CONNECTIN-LIKE PROTEIN"/>
    <property type="match status" value="1"/>
</dbReference>
<dbReference type="PANTHER" id="PTHR24366">
    <property type="entry name" value="IG(IMMUNOGLOBULIN) AND LRR(LEUCINE RICH REPEAT) DOMAINS"/>
    <property type="match status" value="1"/>
</dbReference>
<dbReference type="Pfam" id="PF13855">
    <property type="entry name" value="LRR_8"/>
    <property type="match status" value="2"/>
</dbReference>
<dbReference type="SMART" id="SM00369">
    <property type="entry name" value="LRR_TYP"/>
    <property type="match status" value="8"/>
</dbReference>
<dbReference type="SMART" id="SM00082">
    <property type="entry name" value="LRRCT"/>
    <property type="match status" value="1"/>
</dbReference>
<dbReference type="SUPFAM" id="SSF52058">
    <property type="entry name" value="L domain-like"/>
    <property type="match status" value="1"/>
</dbReference>
<dbReference type="PROSITE" id="PS51450">
    <property type="entry name" value="LRR"/>
    <property type="match status" value="8"/>
</dbReference>
<evidence type="ECO:0000255" key="1"/>
<evidence type="ECO:0000256" key="2">
    <source>
        <dbReference type="SAM" id="MobiDB-lite"/>
    </source>
</evidence>
<evidence type="ECO:0000305" key="3"/>
<accession>Q01819</accession>
<accession>Q8MRN1</accession>
<accession>Q9VZ74</accession>
<organism>
    <name type="scientific">Drosophila melanogaster</name>
    <name type="common">Fruit fly</name>
    <dbReference type="NCBI Taxonomy" id="7227"/>
    <lineage>
        <taxon>Eukaryota</taxon>
        <taxon>Metazoa</taxon>
        <taxon>Ecdysozoa</taxon>
        <taxon>Arthropoda</taxon>
        <taxon>Hexapoda</taxon>
        <taxon>Insecta</taxon>
        <taxon>Pterygota</taxon>
        <taxon>Neoptera</taxon>
        <taxon>Endopterygota</taxon>
        <taxon>Diptera</taxon>
        <taxon>Brachycera</taxon>
        <taxon>Muscomorpha</taxon>
        <taxon>Ephydroidea</taxon>
        <taxon>Drosophilidae</taxon>
        <taxon>Drosophila</taxon>
        <taxon>Sophophora</taxon>
    </lineage>
</organism>